<proteinExistence type="inferred from homology"/>
<comment type="function">
    <text evidence="1">Nucleotidase that shows phosphatase activity on nucleoside 5'-monophosphates.</text>
</comment>
<comment type="catalytic activity">
    <reaction evidence="1">
        <text>a ribonucleoside 5'-phosphate + H2O = a ribonucleoside + phosphate</text>
        <dbReference type="Rhea" id="RHEA:12484"/>
        <dbReference type="ChEBI" id="CHEBI:15377"/>
        <dbReference type="ChEBI" id="CHEBI:18254"/>
        <dbReference type="ChEBI" id="CHEBI:43474"/>
        <dbReference type="ChEBI" id="CHEBI:58043"/>
        <dbReference type="EC" id="3.1.3.5"/>
    </reaction>
</comment>
<comment type="cofactor">
    <cofactor evidence="1">
        <name>a divalent metal cation</name>
        <dbReference type="ChEBI" id="CHEBI:60240"/>
    </cofactor>
    <text evidence="1">Binds 1 divalent metal cation per subunit.</text>
</comment>
<comment type="subcellular location">
    <subcellularLocation>
        <location evidence="1">Cytoplasm</location>
    </subcellularLocation>
</comment>
<comment type="similarity">
    <text evidence="1">Belongs to the SurE nucleotidase family.</text>
</comment>
<sequence>MKILLTNDDGVHSPGLAALIKKVSEVAEVVVVAPDREQSAVSHALTLHHPLRAARIGANVFSVEGTPTDCVNLGIHSLLSYRPDLVISGVNRGANIADDVTYSGTVAAALEATLMGIPAIAVSLVTRSAGEHFEAAAACAAKLAVTVHQKGLPRDTYLNVNVPDLPAESLLPPLITCQGKRSYEGTIVDKVDPRGRNYYWIGTTDLSFEDIPGTDYHAVSRGHVSISPLHIDLTNHASIEMLKSWELP</sequence>
<protein>
    <recommendedName>
        <fullName evidence="1">5'-nucleotidase SurE</fullName>
        <ecNumber evidence="1">3.1.3.5</ecNumber>
    </recommendedName>
    <alternativeName>
        <fullName evidence="1">Nucleoside 5'-monophosphate phosphohydrolase</fullName>
    </alternativeName>
</protein>
<name>SURE_CITBB</name>
<dbReference type="EC" id="3.1.3.5" evidence="1"/>
<dbReference type="EMBL" id="CP001124">
    <property type="protein sequence ID" value="ACH39691.1"/>
    <property type="molecule type" value="Genomic_DNA"/>
</dbReference>
<dbReference type="RefSeq" id="WP_012531116.1">
    <property type="nucleotide sequence ID" value="NC_011146.1"/>
</dbReference>
<dbReference type="SMR" id="B5EHF5"/>
<dbReference type="STRING" id="404380.Gbem_2685"/>
<dbReference type="KEGG" id="gbm:Gbem_2685"/>
<dbReference type="eggNOG" id="COG0496">
    <property type="taxonomic scope" value="Bacteria"/>
</dbReference>
<dbReference type="HOGENOM" id="CLU_045192_1_2_7"/>
<dbReference type="OrthoDB" id="9780815at2"/>
<dbReference type="Proteomes" id="UP000008825">
    <property type="component" value="Chromosome"/>
</dbReference>
<dbReference type="GO" id="GO:0005737">
    <property type="term" value="C:cytoplasm"/>
    <property type="evidence" value="ECO:0007669"/>
    <property type="project" value="UniProtKB-SubCell"/>
</dbReference>
<dbReference type="GO" id="GO:0008254">
    <property type="term" value="F:3'-nucleotidase activity"/>
    <property type="evidence" value="ECO:0007669"/>
    <property type="project" value="TreeGrafter"/>
</dbReference>
<dbReference type="GO" id="GO:0008253">
    <property type="term" value="F:5'-nucleotidase activity"/>
    <property type="evidence" value="ECO:0007669"/>
    <property type="project" value="UniProtKB-UniRule"/>
</dbReference>
<dbReference type="GO" id="GO:0004309">
    <property type="term" value="F:exopolyphosphatase activity"/>
    <property type="evidence" value="ECO:0007669"/>
    <property type="project" value="TreeGrafter"/>
</dbReference>
<dbReference type="GO" id="GO:0046872">
    <property type="term" value="F:metal ion binding"/>
    <property type="evidence" value="ECO:0007669"/>
    <property type="project" value="UniProtKB-UniRule"/>
</dbReference>
<dbReference type="GO" id="GO:0000166">
    <property type="term" value="F:nucleotide binding"/>
    <property type="evidence" value="ECO:0007669"/>
    <property type="project" value="UniProtKB-KW"/>
</dbReference>
<dbReference type="FunFam" id="3.40.1210.10:FF:000001">
    <property type="entry name" value="5'/3'-nucleotidase SurE"/>
    <property type="match status" value="1"/>
</dbReference>
<dbReference type="Gene3D" id="3.40.1210.10">
    <property type="entry name" value="Survival protein SurE-like phosphatase/nucleotidase"/>
    <property type="match status" value="1"/>
</dbReference>
<dbReference type="HAMAP" id="MF_00060">
    <property type="entry name" value="SurE"/>
    <property type="match status" value="1"/>
</dbReference>
<dbReference type="InterPro" id="IPR030048">
    <property type="entry name" value="SurE"/>
</dbReference>
<dbReference type="InterPro" id="IPR002828">
    <property type="entry name" value="SurE-like_Pase/nucleotidase"/>
</dbReference>
<dbReference type="InterPro" id="IPR036523">
    <property type="entry name" value="SurE-like_sf"/>
</dbReference>
<dbReference type="NCBIfam" id="NF001489">
    <property type="entry name" value="PRK00346.1-3"/>
    <property type="match status" value="1"/>
</dbReference>
<dbReference type="NCBIfam" id="NF001490">
    <property type="entry name" value="PRK00346.1-4"/>
    <property type="match status" value="1"/>
</dbReference>
<dbReference type="NCBIfam" id="TIGR00087">
    <property type="entry name" value="surE"/>
    <property type="match status" value="1"/>
</dbReference>
<dbReference type="PANTHER" id="PTHR30457">
    <property type="entry name" value="5'-NUCLEOTIDASE SURE"/>
    <property type="match status" value="1"/>
</dbReference>
<dbReference type="PANTHER" id="PTHR30457:SF12">
    <property type="entry name" value="5'_3'-NUCLEOTIDASE SURE"/>
    <property type="match status" value="1"/>
</dbReference>
<dbReference type="Pfam" id="PF01975">
    <property type="entry name" value="SurE"/>
    <property type="match status" value="1"/>
</dbReference>
<dbReference type="SUPFAM" id="SSF64167">
    <property type="entry name" value="SurE-like"/>
    <property type="match status" value="1"/>
</dbReference>
<feature type="chain" id="PRO_1000092005" description="5'-nucleotidase SurE">
    <location>
        <begin position="1"/>
        <end position="248"/>
    </location>
</feature>
<feature type="binding site" evidence="1">
    <location>
        <position position="8"/>
    </location>
    <ligand>
        <name>a divalent metal cation</name>
        <dbReference type="ChEBI" id="CHEBI:60240"/>
    </ligand>
</feature>
<feature type="binding site" evidence="1">
    <location>
        <position position="9"/>
    </location>
    <ligand>
        <name>a divalent metal cation</name>
        <dbReference type="ChEBI" id="CHEBI:60240"/>
    </ligand>
</feature>
<feature type="binding site" evidence="1">
    <location>
        <position position="39"/>
    </location>
    <ligand>
        <name>a divalent metal cation</name>
        <dbReference type="ChEBI" id="CHEBI:60240"/>
    </ligand>
</feature>
<feature type="binding site" evidence="1">
    <location>
        <position position="91"/>
    </location>
    <ligand>
        <name>a divalent metal cation</name>
        <dbReference type="ChEBI" id="CHEBI:60240"/>
    </ligand>
</feature>
<accession>B5EHF5</accession>
<evidence type="ECO:0000255" key="1">
    <source>
        <dbReference type="HAMAP-Rule" id="MF_00060"/>
    </source>
</evidence>
<reference key="1">
    <citation type="submission" date="2008-07" db="EMBL/GenBank/DDBJ databases">
        <title>Complete sequence of Geobacter bemidjiensis BEM.</title>
        <authorList>
            <consortium name="US DOE Joint Genome Institute"/>
            <person name="Lucas S."/>
            <person name="Copeland A."/>
            <person name="Lapidus A."/>
            <person name="Glavina del Rio T."/>
            <person name="Dalin E."/>
            <person name="Tice H."/>
            <person name="Bruce D."/>
            <person name="Goodwin L."/>
            <person name="Pitluck S."/>
            <person name="Kiss H."/>
            <person name="Brettin T."/>
            <person name="Detter J.C."/>
            <person name="Han C."/>
            <person name="Kuske C.R."/>
            <person name="Schmutz J."/>
            <person name="Larimer F."/>
            <person name="Land M."/>
            <person name="Hauser L."/>
            <person name="Kyrpides N."/>
            <person name="Lykidis A."/>
            <person name="Lovley D."/>
            <person name="Richardson P."/>
        </authorList>
    </citation>
    <scope>NUCLEOTIDE SEQUENCE [LARGE SCALE GENOMIC DNA]</scope>
    <source>
        <strain>ATCC BAA-1014 / DSM 16622 / JCM 12645 / Bem</strain>
    </source>
</reference>
<organism>
    <name type="scientific">Citrifermentans bemidjiense (strain ATCC BAA-1014 / DSM 16622 / JCM 12645 / Bem)</name>
    <name type="common">Geobacter bemidjiensis</name>
    <dbReference type="NCBI Taxonomy" id="404380"/>
    <lineage>
        <taxon>Bacteria</taxon>
        <taxon>Pseudomonadati</taxon>
        <taxon>Thermodesulfobacteriota</taxon>
        <taxon>Desulfuromonadia</taxon>
        <taxon>Geobacterales</taxon>
        <taxon>Geobacteraceae</taxon>
        <taxon>Citrifermentans</taxon>
    </lineage>
</organism>
<keyword id="KW-0963">Cytoplasm</keyword>
<keyword id="KW-0378">Hydrolase</keyword>
<keyword id="KW-0479">Metal-binding</keyword>
<keyword id="KW-0547">Nucleotide-binding</keyword>
<keyword id="KW-1185">Reference proteome</keyword>
<gene>
    <name evidence="1" type="primary">surE</name>
    <name type="ordered locus">Gbem_2685</name>
</gene>